<dbReference type="EC" id="1.3.3.3" evidence="1"/>
<dbReference type="EMBL" id="CP000563">
    <property type="protein sequence ID" value="ABN59574.1"/>
    <property type="molecule type" value="Genomic_DNA"/>
</dbReference>
<dbReference type="RefSeq" id="WP_011845358.1">
    <property type="nucleotide sequence ID" value="NC_009052.1"/>
</dbReference>
<dbReference type="SMR" id="A3CYL1"/>
<dbReference type="STRING" id="325240.Sbal_0038"/>
<dbReference type="KEGG" id="sbl:Sbal_0038"/>
<dbReference type="HOGENOM" id="CLU_026169_0_1_6"/>
<dbReference type="OrthoDB" id="9777553at2"/>
<dbReference type="UniPathway" id="UPA00251">
    <property type="reaction ID" value="UER00322"/>
</dbReference>
<dbReference type="Proteomes" id="UP000001557">
    <property type="component" value="Chromosome"/>
</dbReference>
<dbReference type="GO" id="GO:0005737">
    <property type="term" value="C:cytoplasm"/>
    <property type="evidence" value="ECO:0007669"/>
    <property type="project" value="UniProtKB-SubCell"/>
</dbReference>
<dbReference type="GO" id="GO:0004109">
    <property type="term" value="F:coproporphyrinogen oxidase activity"/>
    <property type="evidence" value="ECO:0007669"/>
    <property type="project" value="UniProtKB-UniRule"/>
</dbReference>
<dbReference type="GO" id="GO:0046872">
    <property type="term" value="F:metal ion binding"/>
    <property type="evidence" value="ECO:0007669"/>
    <property type="project" value="UniProtKB-KW"/>
</dbReference>
<dbReference type="GO" id="GO:0042803">
    <property type="term" value="F:protein homodimerization activity"/>
    <property type="evidence" value="ECO:0000250"/>
    <property type="project" value="UniProtKB"/>
</dbReference>
<dbReference type="GO" id="GO:0006782">
    <property type="term" value="P:protoporphyrinogen IX biosynthetic process"/>
    <property type="evidence" value="ECO:0007669"/>
    <property type="project" value="UniProtKB-UniRule"/>
</dbReference>
<dbReference type="FunFam" id="3.40.1500.10:FF:000001">
    <property type="entry name" value="Oxygen-dependent coproporphyrinogen-III oxidase"/>
    <property type="match status" value="1"/>
</dbReference>
<dbReference type="Gene3D" id="3.40.1500.10">
    <property type="entry name" value="Coproporphyrinogen III oxidase, aerobic"/>
    <property type="match status" value="1"/>
</dbReference>
<dbReference type="HAMAP" id="MF_00333">
    <property type="entry name" value="Coprogen_oxidas"/>
    <property type="match status" value="1"/>
</dbReference>
<dbReference type="InterPro" id="IPR001260">
    <property type="entry name" value="Coprogen_oxidase_aer"/>
</dbReference>
<dbReference type="InterPro" id="IPR036406">
    <property type="entry name" value="Coprogen_oxidase_aer_sf"/>
</dbReference>
<dbReference type="InterPro" id="IPR018375">
    <property type="entry name" value="Coprogen_oxidase_CS"/>
</dbReference>
<dbReference type="NCBIfam" id="NF003727">
    <property type="entry name" value="PRK05330.1"/>
    <property type="match status" value="1"/>
</dbReference>
<dbReference type="PANTHER" id="PTHR10755">
    <property type="entry name" value="COPROPORPHYRINOGEN III OXIDASE, MITOCHONDRIAL"/>
    <property type="match status" value="1"/>
</dbReference>
<dbReference type="PANTHER" id="PTHR10755:SF0">
    <property type="entry name" value="OXYGEN-DEPENDENT COPROPORPHYRINOGEN-III OXIDASE, MITOCHONDRIAL"/>
    <property type="match status" value="1"/>
</dbReference>
<dbReference type="Pfam" id="PF01218">
    <property type="entry name" value="Coprogen_oxidas"/>
    <property type="match status" value="1"/>
</dbReference>
<dbReference type="PIRSF" id="PIRSF000166">
    <property type="entry name" value="Coproporphyri_ox"/>
    <property type="match status" value="1"/>
</dbReference>
<dbReference type="PRINTS" id="PR00073">
    <property type="entry name" value="COPRGNOXDASE"/>
</dbReference>
<dbReference type="SUPFAM" id="SSF102886">
    <property type="entry name" value="Coproporphyrinogen III oxidase"/>
    <property type="match status" value="1"/>
</dbReference>
<dbReference type="PROSITE" id="PS01021">
    <property type="entry name" value="COPROGEN_OXIDASE"/>
    <property type="match status" value="1"/>
</dbReference>
<keyword id="KW-0963">Cytoplasm</keyword>
<keyword id="KW-0350">Heme biosynthesis</keyword>
<keyword id="KW-0479">Metal-binding</keyword>
<keyword id="KW-0560">Oxidoreductase</keyword>
<keyword id="KW-0627">Porphyrin biosynthesis</keyword>
<keyword id="KW-1185">Reference proteome</keyword>
<reference key="1">
    <citation type="submission" date="2007-02" db="EMBL/GenBank/DDBJ databases">
        <title>Complete sequence of chromosome of Shewanella baltica OS155.</title>
        <authorList>
            <consortium name="US DOE Joint Genome Institute"/>
            <person name="Copeland A."/>
            <person name="Lucas S."/>
            <person name="Lapidus A."/>
            <person name="Barry K."/>
            <person name="Detter J.C."/>
            <person name="Glavina del Rio T."/>
            <person name="Hammon N."/>
            <person name="Israni S."/>
            <person name="Dalin E."/>
            <person name="Tice H."/>
            <person name="Pitluck S."/>
            <person name="Sims D.R."/>
            <person name="Brettin T."/>
            <person name="Bruce D."/>
            <person name="Han C."/>
            <person name="Tapia R."/>
            <person name="Brainard J."/>
            <person name="Schmutz J."/>
            <person name="Larimer F."/>
            <person name="Land M."/>
            <person name="Hauser L."/>
            <person name="Kyrpides N."/>
            <person name="Mikhailova N."/>
            <person name="Brettar I."/>
            <person name="Klappenbach J."/>
            <person name="Konstantinidis K."/>
            <person name="Rodrigues J."/>
            <person name="Tiedje J."/>
            <person name="Richardson P."/>
        </authorList>
    </citation>
    <scope>NUCLEOTIDE SEQUENCE [LARGE SCALE GENOMIC DNA]</scope>
    <source>
        <strain>OS155 / ATCC BAA-1091</strain>
    </source>
</reference>
<gene>
    <name evidence="1" type="primary">hemF</name>
    <name type="ordered locus">Sbal_0038</name>
</gene>
<comment type="function">
    <text evidence="1">Involved in the heme biosynthesis. Catalyzes the aerobic oxidative decarboxylation of propionate groups of rings A and B of coproporphyrinogen-III to yield the vinyl groups in protoporphyrinogen-IX.</text>
</comment>
<comment type="catalytic activity">
    <reaction evidence="1">
        <text>coproporphyrinogen III + O2 + 2 H(+) = protoporphyrinogen IX + 2 CO2 + 2 H2O</text>
        <dbReference type="Rhea" id="RHEA:18257"/>
        <dbReference type="ChEBI" id="CHEBI:15377"/>
        <dbReference type="ChEBI" id="CHEBI:15378"/>
        <dbReference type="ChEBI" id="CHEBI:15379"/>
        <dbReference type="ChEBI" id="CHEBI:16526"/>
        <dbReference type="ChEBI" id="CHEBI:57307"/>
        <dbReference type="ChEBI" id="CHEBI:57309"/>
        <dbReference type="EC" id="1.3.3.3"/>
    </reaction>
</comment>
<comment type="cofactor">
    <cofactor evidence="1">
        <name>a divalent metal cation</name>
        <dbReference type="ChEBI" id="CHEBI:60240"/>
    </cofactor>
</comment>
<comment type="pathway">
    <text evidence="1">Porphyrin-containing compound metabolism; protoporphyrin-IX biosynthesis; protoporphyrinogen-IX from coproporphyrinogen-III (O2 route): step 1/1.</text>
</comment>
<comment type="subunit">
    <text evidence="1">Homodimer.</text>
</comment>
<comment type="subcellular location">
    <subcellularLocation>
        <location evidence="1">Cytoplasm</location>
    </subcellularLocation>
</comment>
<comment type="similarity">
    <text evidence="1">Belongs to the aerobic coproporphyrinogen-III oxidase family.</text>
</comment>
<protein>
    <recommendedName>
        <fullName evidence="1">Oxygen-dependent coproporphyrinogen-III oxidase</fullName>
        <shortName evidence="1">CPO</shortName>
        <shortName evidence="1">Coprogen oxidase</shortName>
        <shortName evidence="1">Coproporphyrinogenase</shortName>
        <ecNumber evidence="1">1.3.3.3</ecNumber>
    </recommendedName>
</protein>
<sequence length="302" mass="34054">MSVPDAAVVKAFLLDLQNRICAGLQALDGQARFAADSWTRAEGGGGTSRVLTQGAVFEQAGVNFSHVTGAAMPASATAHRPELAGRSFEAMGVSLVIHPNNPYIPTTHANVRFFIAQKEGADPVWWFGGGFDLTPYYPFEEDVREWHQTSKDICAPFGDEVYPKYKKWCDEYFFLPHRNETRGVGGLFFDDLNQAGFEQSFSFMQAVGNGFLTAYAPIVERRKDTEFGERERQFQLYRRGRYVEFNLVYDRGTLFGLQTGGRTESILMSMPPLVRWQYAYTPEAGSPEADLYDNYLKPRDWV</sequence>
<accession>A3CYL1</accession>
<feature type="chain" id="PRO_1000019497" description="Oxygen-dependent coproporphyrinogen-III oxidase">
    <location>
        <begin position="1"/>
        <end position="302"/>
    </location>
</feature>
<feature type="region of interest" description="Important for dimerization" evidence="1">
    <location>
        <begin position="242"/>
        <end position="277"/>
    </location>
</feature>
<feature type="active site" description="Proton donor" evidence="1">
    <location>
        <position position="108"/>
    </location>
</feature>
<feature type="binding site" evidence="1">
    <location>
        <position position="94"/>
    </location>
    <ligand>
        <name>substrate</name>
    </ligand>
</feature>
<feature type="binding site" evidence="1">
    <location>
        <position position="98"/>
    </location>
    <ligand>
        <name>a divalent metal cation</name>
        <dbReference type="ChEBI" id="CHEBI:60240"/>
    </ligand>
</feature>
<feature type="binding site" evidence="1">
    <location>
        <position position="108"/>
    </location>
    <ligand>
        <name>a divalent metal cation</name>
        <dbReference type="ChEBI" id="CHEBI:60240"/>
    </ligand>
</feature>
<feature type="binding site" evidence="1">
    <location>
        <begin position="110"/>
        <end position="112"/>
    </location>
    <ligand>
        <name>substrate</name>
    </ligand>
</feature>
<feature type="binding site" evidence="1">
    <location>
        <position position="147"/>
    </location>
    <ligand>
        <name>a divalent metal cation</name>
        <dbReference type="ChEBI" id="CHEBI:60240"/>
    </ligand>
</feature>
<feature type="binding site" evidence="1">
    <location>
        <position position="177"/>
    </location>
    <ligand>
        <name>a divalent metal cation</name>
        <dbReference type="ChEBI" id="CHEBI:60240"/>
    </ligand>
</feature>
<feature type="binding site" evidence="1">
    <location>
        <begin position="260"/>
        <end position="262"/>
    </location>
    <ligand>
        <name>substrate</name>
    </ligand>
</feature>
<feature type="site" description="Important for dimerization" evidence="1">
    <location>
        <position position="177"/>
    </location>
</feature>
<proteinExistence type="inferred from homology"/>
<organism>
    <name type="scientific">Shewanella baltica (strain OS155 / ATCC BAA-1091)</name>
    <dbReference type="NCBI Taxonomy" id="325240"/>
    <lineage>
        <taxon>Bacteria</taxon>
        <taxon>Pseudomonadati</taxon>
        <taxon>Pseudomonadota</taxon>
        <taxon>Gammaproteobacteria</taxon>
        <taxon>Alteromonadales</taxon>
        <taxon>Shewanellaceae</taxon>
        <taxon>Shewanella</taxon>
    </lineage>
</organism>
<name>HEM6_SHEB5</name>
<evidence type="ECO:0000255" key="1">
    <source>
        <dbReference type="HAMAP-Rule" id="MF_00333"/>
    </source>
</evidence>